<evidence type="ECO:0000250" key="1"/>
<evidence type="ECO:0000250" key="2">
    <source>
        <dbReference type="UniProtKB" id="P00157"/>
    </source>
</evidence>
<evidence type="ECO:0000255" key="3">
    <source>
        <dbReference type="PROSITE-ProRule" id="PRU00967"/>
    </source>
</evidence>
<evidence type="ECO:0000255" key="4">
    <source>
        <dbReference type="PROSITE-ProRule" id="PRU00968"/>
    </source>
</evidence>
<sequence>MTNIRKTHPLLKIINSSFVDLPAPSSLSSWWNFGSLLGVCLGVQILTGLFLAMHYTSDTATAFNSVTHICRDVNYGWLLRYLHANGASMFFICLYLHVGRGLYYGSYTYSETWNIGILLLFAVMATAFMGYVLPWGQMSFWGATVITNLLSAIPYIGTELVQWIWGGFSVDKATLTRFFAFHFLLPFIVTALVMVHLLFLHETGSNNPTGIPSDPDMIPSHPYYTIKDILGFLVMLTALATLVLFSPDLLGDPDNYIPANPLITPPHIKPEWYFLFAYAILRSIPNKLGGVLALVMSILILAIVPILHMSKQRSMMFRPLSQCLFWLLVAVLFTLTWIGGQPVEHPYIIIGQTASVLYFLIILFLMPTISLLENYLLKW</sequence>
<protein>
    <recommendedName>
        <fullName>Cytochrome b</fullName>
    </recommendedName>
    <alternativeName>
        <fullName>Complex III subunit 3</fullName>
    </alternativeName>
    <alternativeName>
        <fullName>Complex III subunit III</fullName>
    </alternativeName>
    <alternativeName>
        <fullName>Cytochrome b-c1 complex subunit 3</fullName>
    </alternativeName>
    <alternativeName>
        <fullName>Ubiquinol-cytochrome-c reductase complex cytochrome b subunit</fullName>
    </alternativeName>
</protein>
<gene>
    <name type="primary">MT-CYB</name>
    <name type="synonym">COB</name>
    <name type="synonym">CYTB</name>
    <name type="synonym">MTCYB</name>
</gene>
<name>CYB_ARTIT</name>
<keyword id="KW-0249">Electron transport</keyword>
<keyword id="KW-0349">Heme</keyword>
<keyword id="KW-0408">Iron</keyword>
<keyword id="KW-0472">Membrane</keyword>
<keyword id="KW-0479">Metal-binding</keyword>
<keyword id="KW-0496">Mitochondrion</keyword>
<keyword id="KW-0999">Mitochondrion inner membrane</keyword>
<keyword id="KW-0679">Respiratory chain</keyword>
<keyword id="KW-0812">Transmembrane</keyword>
<keyword id="KW-1133">Transmembrane helix</keyword>
<keyword id="KW-0813">Transport</keyword>
<keyword id="KW-0830">Ubiquinone</keyword>
<reference key="1">
    <citation type="submission" date="1996-08" db="EMBL/GenBank/DDBJ databases">
        <title>Phylogenetic accuracy, stability, and congruence: relationships within and among the New World bat genera Artibeus, Dermanura, and Koopmania.</title>
        <authorList>
            <person name="den Bussche R.A."/>
            <person name="Hudgeons J.L."/>
            <person name="Baker R.J."/>
        </authorList>
    </citation>
    <scope>NUCLEOTIDE SEQUENCE [GENOMIC DNA]</scope>
    <source>
        <strain>Isolate TK 31924</strain>
    </source>
</reference>
<organism>
    <name type="scientific">Artibeus intermedius</name>
    <name type="common">Intermediate fruit-eating bat</name>
    <dbReference type="NCBI Taxonomy" id="51014"/>
    <lineage>
        <taxon>Eukaryota</taxon>
        <taxon>Metazoa</taxon>
        <taxon>Chordata</taxon>
        <taxon>Craniata</taxon>
        <taxon>Vertebrata</taxon>
        <taxon>Euteleostomi</taxon>
        <taxon>Mammalia</taxon>
        <taxon>Eutheria</taxon>
        <taxon>Laurasiatheria</taxon>
        <taxon>Chiroptera</taxon>
        <taxon>Yangochiroptera</taxon>
        <taxon>Phyllostomidae</taxon>
        <taxon>Stenodermatinae</taxon>
        <taxon>Artibeus</taxon>
    </lineage>
</organism>
<comment type="function">
    <text evidence="2">Component of the ubiquinol-cytochrome c reductase complex (complex III or cytochrome b-c1 complex) that is part of the mitochondrial respiratory chain. The b-c1 complex mediates electron transfer from ubiquinol to cytochrome c. Contributes to the generation of a proton gradient across the mitochondrial membrane that is then used for ATP synthesis.</text>
</comment>
<comment type="cofactor">
    <cofactor evidence="2">
        <name>heme b</name>
        <dbReference type="ChEBI" id="CHEBI:60344"/>
    </cofactor>
    <text evidence="2">Binds 2 heme b groups non-covalently.</text>
</comment>
<comment type="subunit">
    <text evidence="2">The cytochrome bc1 complex contains 11 subunits: 3 respiratory subunits (MT-CYB, CYC1 and UQCRFS1), 2 core proteins (UQCRC1 and UQCRC2) and 6 low-molecular weight proteins (UQCRH/QCR6, UQCRB/QCR7, UQCRQ/QCR8, UQCR10/QCR9, UQCR11/QCR10 and a cleavage product of UQCRFS1). This cytochrome bc1 complex then forms a dimer.</text>
</comment>
<comment type="subcellular location">
    <subcellularLocation>
        <location evidence="2">Mitochondrion inner membrane</location>
        <topology evidence="2">Multi-pass membrane protein</topology>
    </subcellularLocation>
</comment>
<comment type="miscellaneous">
    <text evidence="1">Heme 1 (or BL or b562) is low-potential and absorbs at about 562 nm, and heme 2 (or BH or b566) is high-potential and absorbs at about 566 nm.</text>
</comment>
<comment type="similarity">
    <text evidence="3 4">Belongs to the cytochrome b family.</text>
</comment>
<comment type="caution">
    <text evidence="2">The full-length protein contains only eight transmembrane helices, not nine as predicted by bioinformatics tools.</text>
</comment>
<dbReference type="EMBL" id="U66502">
    <property type="protein sequence ID" value="AAB06777.1"/>
    <property type="molecule type" value="Genomic_DNA"/>
</dbReference>
<dbReference type="SMR" id="Q95736"/>
<dbReference type="GO" id="GO:0005743">
    <property type="term" value="C:mitochondrial inner membrane"/>
    <property type="evidence" value="ECO:0007669"/>
    <property type="project" value="UniProtKB-SubCell"/>
</dbReference>
<dbReference type="GO" id="GO:0045275">
    <property type="term" value="C:respiratory chain complex III"/>
    <property type="evidence" value="ECO:0007669"/>
    <property type="project" value="InterPro"/>
</dbReference>
<dbReference type="GO" id="GO:0046872">
    <property type="term" value="F:metal ion binding"/>
    <property type="evidence" value="ECO:0007669"/>
    <property type="project" value="UniProtKB-KW"/>
</dbReference>
<dbReference type="GO" id="GO:0008121">
    <property type="term" value="F:ubiquinol-cytochrome-c reductase activity"/>
    <property type="evidence" value="ECO:0007669"/>
    <property type="project" value="InterPro"/>
</dbReference>
<dbReference type="GO" id="GO:0006122">
    <property type="term" value="P:mitochondrial electron transport, ubiquinol to cytochrome c"/>
    <property type="evidence" value="ECO:0007669"/>
    <property type="project" value="TreeGrafter"/>
</dbReference>
<dbReference type="CDD" id="cd00290">
    <property type="entry name" value="cytochrome_b_C"/>
    <property type="match status" value="1"/>
</dbReference>
<dbReference type="CDD" id="cd00284">
    <property type="entry name" value="Cytochrome_b_N"/>
    <property type="match status" value="1"/>
</dbReference>
<dbReference type="FunFam" id="1.20.810.10:FF:000002">
    <property type="entry name" value="Cytochrome b"/>
    <property type="match status" value="1"/>
</dbReference>
<dbReference type="Gene3D" id="1.20.810.10">
    <property type="entry name" value="Cytochrome Bc1 Complex, Chain C"/>
    <property type="match status" value="1"/>
</dbReference>
<dbReference type="InterPro" id="IPR005798">
    <property type="entry name" value="Cyt_b/b6_C"/>
</dbReference>
<dbReference type="InterPro" id="IPR036150">
    <property type="entry name" value="Cyt_b/b6_C_sf"/>
</dbReference>
<dbReference type="InterPro" id="IPR005797">
    <property type="entry name" value="Cyt_b/b6_N"/>
</dbReference>
<dbReference type="InterPro" id="IPR027387">
    <property type="entry name" value="Cytb/b6-like_sf"/>
</dbReference>
<dbReference type="InterPro" id="IPR030689">
    <property type="entry name" value="Cytochrome_b"/>
</dbReference>
<dbReference type="InterPro" id="IPR048260">
    <property type="entry name" value="Cytochrome_b_C_euk/bac"/>
</dbReference>
<dbReference type="InterPro" id="IPR048259">
    <property type="entry name" value="Cytochrome_b_N_euk/bac"/>
</dbReference>
<dbReference type="InterPro" id="IPR016174">
    <property type="entry name" value="Di-haem_cyt_TM"/>
</dbReference>
<dbReference type="PANTHER" id="PTHR19271">
    <property type="entry name" value="CYTOCHROME B"/>
    <property type="match status" value="1"/>
</dbReference>
<dbReference type="PANTHER" id="PTHR19271:SF16">
    <property type="entry name" value="CYTOCHROME B"/>
    <property type="match status" value="1"/>
</dbReference>
<dbReference type="Pfam" id="PF00032">
    <property type="entry name" value="Cytochrom_B_C"/>
    <property type="match status" value="1"/>
</dbReference>
<dbReference type="Pfam" id="PF00033">
    <property type="entry name" value="Cytochrome_B"/>
    <property type="match status" value="1"/>
</dbReference>
<dbReference type="PIRSF" id="PIRSF038885">
    <property type="entry name" value="COB"/>
    <property type="match status" value="1"/>
</dbReference>
<dbReference type="SUPFAM" id="SSF81648">
    <property type="entry name" value="a domain/subunit of cytochrome bc1 complex (Ubiquinol-cytochrome c reductase)"/>
    <property type="match status" value="1"/>
</dbReference>
<dbReference type="SUPFAM" id="SSF81342">
    <property type="entry name" value="Transmembrane di-heme cytochromes"/>
    <property type="match status" value="1"/>
</dbReference>
<dbReference type="PROSITE" id="PS51003">
    <property type="entry name" value="CYTB_CTER"/>
    <property type="match status" value="1"/>
</dbReference>
<dbReference type="PROSITE" id="PS51002">
    <property type="entry name" value="CYTB_NTER"/>
    <property type="match status" value="1"/>
</dbReference>
<accession>Q95736</accession>
<geneLocation type="mitochondrion"/>
<feature type="chain" id="PRO_0000060635" description="Cytochrome b">
    <location>
        <begin position="1"/>
        <end position="379"/>
    </location>
</feature>
<feature type="transmembrane region" description="Helical" evidence="2">
    <location>
        <begin position="33"/>
        <end position="53"/>
    </location>
</feature>
<feature type="transmembrane region" description="Helical" evidence="2">
    <location>
        <begin position="77"/>
        <end position="98"/>
    </location>
</feature>
<feature type="transmembrane region" description="Helical" evidence="2">
    <location>
        <begin position="113"/>
        <end position="133"/>
    </location>
</feature>
<feature type="transmembrane region" description="Helical" evidence="2">
    <location>
        <begin position="178"/>
        <end position="198"/>
    </location>
</feature>
<feature type="transmembrane region" description="Helical" evidence="2">
    <location>
        <begin position="226"/>
        <end position="246"/>
    </location>
</feature>
<feature type="transmembrane region" description="Helical" evidence="2">
    <location>
        <begin position="288"/>
        <end position="308"/>
    </location>
</feature>
<feature type="transmembrane region" description="Helical" evidence="2">
    <location>
        <begin position="320"/>
        <end position="340"/>
    </location>
</feature>
<feature type="transmembrane region" description="Helical" evidence="2">
    <location>
        <begin position="347"/>
        <end position="367"/>
    </location>
</feature>
<feature type="binding site" description="axial binding residue" evidence="2">
    <location>
        <position position="83"/>
    </location>
    <ligand>
        <name>heme b</name>
        <dbReference type="ChEBI" id="CHEBI:60344"/>
        <label>b562</label>
    </ligand>
    <ligandPart>
        <name>Fe</name>
        <dbReference type="ChEBI" id="CHEBI:18248"/>
    </ligandPart>
</feature>
<feature type="binding site" description="axial binding residue" evidence="2">
    <location>
        <position position="97"/>
    </location>
    <ligand>
        <name>heme b</name>
        <dbReference type="ChEBI" id="CHEBI:60344"/>
        <label>b566</label>
    </ligand>
    <ligandPart>
        <name>Fe</name>
        <dbReference type="ChEBI" id="CHEBI:18248"/>
    </ligandPart>
</feature>
<feature type="binding site" description="axial binding residue" evidence="2">
    <location>
        <position position="182"/>
    </location>
    <ligand>
        <name>heme b</name>
        <dbReference type="ChEBI" id="CHEBI:60344"/>
        <label>b562</label>
    </ligand>
    <ligandPart>
        <name>Fe</name>
        <dbReference type="ChEBI" id="CHEBI:18248"/>
    </ligandPart>
</feature>
<feature type="binding site" description="axial binding residue" evidence="2">
    <location>
        <position position="196"/>
    </location>
    <ligand>
        <name>heme b</name>
        <dbReference type="ChEBI" id="CHEBI:60344"/>
        <label>b566</label>
    </ligand>
    <ligandPart>
        <name>Fe</name>
        <dbReference type="ChEBI" id="CHEBI:18248"/>
    </ligandPart>
</feature>
<feature type="binding site" evidence="2">
    <location>
        <position position="201"/>
    </location>
    <ligand>
        <name>a ubiquinone</name>
        <dbReference type="ChEBI" id="CHEBI:16389"/>
    </ligand>
</feature>
<proteinExistence type="inferred from homology"/>